<gene>
    <name evidence="1" type="primary">dapE</name>
    <name type="ordered locus">VC0395_A1734</name>
    <name type="ordered locus">VC395_2266</name>
</gene>
<dbReference type="EC" id="3.5.1.18" evidence="1"/>
<dbReference type="EMBL" id="CP000627">
    <property type="protein sequence ID" value="ABQ20631.1"/>
    <property type="molecule type" value="Genomic_DNA"/>
</dbReference>
<dbReference type="EMBL" id="CP001235">
    <property type="protein sequence ID" value="ACP10258.1"/>
    <property type="molecule type" value="Genomic_DNA"/>
</dbReference>
<dbReference type="RefSeq" id="WP_000132408.1">
    <property type="nucleotide sequence ID" value="NZ_JAACZH010000001.1"/>
</dbReference>
<dbReference type="SMR" id="A5F6B5"/>
<dbReference type="KEGG" id="vco:VC0395_A1734"/>
<dbReference type="KEGG" id="vcr:VC395_2266"/>
<dbReference type="PATRIC" id="fig|345073.21.peg.2188"/>
<dbReference type="eggNOG" id="COG0624">
    <property type="taxonomic scope" value="Bacteria"/>
</dbReference>
<dbReference type="HOGENOM" id="CLU_021802_4_0_6"/>
<dbReference type="OrthoDB" id="9809784at2"/>
<dbReference type="UniPathway" id="UPA00034">
    <property type="reaction ID" value="UER00021"/>
</dbReference>
<dbReference type="Proteomes" id="UP000000249">
    <property type="component" value="Chromosome 2"/>
</dbReference>
<dbReference type="GO" id="GO:0008777">
    <property type="term" value="F:acetylornithine deacetylase activity"/>
    <property type="evidence" value="ECO:0007669"/>
    <property type="project" value="TreeGrafter"/>
</dbReference>
<dbReference type="GO" id="GO:0050897">
    <property type="term" value="F:cobalt ion binding"/>
    <property type="evidence" value="ECO:0007669"/>
    <property type="project" value="UniProtKB-UniRule"/>
</dbReference>
<dbReference type="GO" id="GO:0009014">
    <property type="term" value="F:succinyl-diaminopimelate desuccinylase activity"/>
    <property type="evidence" value="ECO:0007669"/>
    <property type="project" value="UniProtKB-UniRule"/>
</dbReference>
<dbReference type="GO" id="GO:0008270">
    <property type="term" value="F:zinc ion binding"/>
    <property type="evidence" value="ECO:0007669"/>
    <property type="project" value="UniProtKB-UniRule"/>
</dbReference>
<dbReference type="GO" id="GO:0019877">
    <property type="term" value="P:diaminopimelate biosynthetic process"/>
    <property type="evidence" value="ECO:0007669"/>
    <property type="project" value="UniProtKB-UniRule"/>
</dbReference>
<dbReference type="GO" id="GO:0006526">
    <property type="term" value="P:L-arginine biosynthetic process"/>
    <property type="evidence" value="ECO:0007669"/>
    <property type="project" value="TreeGrafter"/>
</dbReference>
<dbReference type="GO" id="GO:0009089">
    <property type="term" value="P:lysine biosynthetic process via diaminopimelate"/>
    <property type="evidence" value="ECO:0007669"/>
    <property type="project" value="UniProtKB-UniRule"/>
</dbReference>
<dbReference type="CDD" id="cd03891">
    <property type="entry name" value="M20_DapE_proteobac"/>
    <property type="match status" value="1"/>
</dbReference>
<dbReference type="FunFam" id="3.30.70.360:FF:000011">
    <property type="entry name" value="Succinyl-diaminopimelate desuccinylase"/>
    <property type="match status" value="1"/>
</dbReference>
<dbReference type="FunFam" id="3.40.630.10:FF:000005">
    <property type="entry name" value="Succinyl-diaminopimelate desuccinylase"/>
    <property type="match status" value="1"/>
</dbReference>
<dbReference type="FunFam" id="3.40.630.10:FF:000010">
    <property type="entry name" value="Succinyl-diaminopimelate desuccinylase"/>
    <property type="match status" value="1"/>
</dbReference>
<dbReference type="Gene3D" id="3.40.630.10">
    <property type="entry name" value="Zn peptidases"/>
    <property type="match status" value="2"/>
</dbReference>
<dbReference type="HAMAP" id="MF_01690">
    <property type="entry name" value="DapE"/>
    <property type="match status" value="1"/>
</dbReference>
<dbReference type="InterPro" id="IPR001261">
    <property type="entry name" value="ArgE/DapE_CS"/>
</dbReference>
<dbReference type="InterPro" id="IPR036264">
    <property type="entry name" value="Bact_exopeptidase_dim_dom"/>
</dbReference>
<dbReference type="InterPro" id="IPR005941">
    <property type="entry name" value="DapE_proteobac"/>
</dbReference>
<dbReference type="InterPro" id="IPR002933">
    <property type="entry name" value="Peptidase_M20"/>
</dbReference>
<dbReference type="InterPro" id="IPR011650">
    <property type="entry name" value="Peptidase_M20_dimer"/>
</dbReference>
<dbReference type="InterPro" id="IPR050072">
    <property type="entry name" value="Peptidase_M20A"/>
</dbReference>
<dbReference type="NCBIfam" id="TIGR01246">
    <property type="entry name" value="dapE_proteo"/>
    <property type="match status" value="1"/>
</dbReference>
<dbReference type="NCBIfam" id="NF009557">
    <property type="entry name" value="PRK13009.1"/>
    <property type="match status" value="1"/>
</dbReference>
<dbReference type="PANTHER" id="PTHR43808">
    <property type="entry name" value="ACETYLORNITHINE DEACETYLASE"/>
    <property type="match status" value="1"/>
</dbReference>
<dbReference type="PANTHER" id="PTHR43808:SF31">
    <property type="entry name" value="N-ACETYL-L-CITRULLINE DEACETYLASE"/>
    <property type="match status" value="1"/>
</dbReference>
<dbReference type="Pfam" id="PF07687">
    <property type="entry name" value="M20_dimer"/>
    <property type="match status" value="1"/>
</dbReference>
<dbReference type="Pfam" id="PF01546">
    <property type="entry name" value="Peptidase_M20"/>
    <property type="match status" value="1"/>
</dbReference>
<dbReference type="SUPFAM" id="SSF55031">
    <property type="entry name" value="Bacterial exopeptidase dimerisation domain"/>
    <property type="match status" value="1"/>
</dbReference>
<dbReference type="SUPFAM" id="SSF53187">
    <property type="entry name" value="Zn-dependent exopeptidases"/>
    <property type="match status" value="1"/>
</dbReference>
<dbReference type="PROSITE" id="PS00759">
    <property type="entry name" value="ARGE_DAPE_CPG2_2"/>
    <property type="match status" value="1"/>
</dbReference>
<protein>
    <recommendedName>
        <fullName evidence="1">Succinyl-diaminopimelate desuccinylase</fullName>
        <shortName evidence="1">SDAP desuccinylase</shortName>
        <ecNumber evidence="1">3.5.1.18</ecNumber>
    </recommendedName>
    <alternativeName>
        <fullName evidence="1">N-succinyl-LL-2,6-diaminoheptanedioate amidohydrolase</fullName>
    </alternativeName>
</protein>
<sequence>MTDSPVLALAKELISRQSVTPADAGCQDLMIERLKALGFEIESMVFEDTTNFWARRGTQSPLFVFAGHTDVVPAGPLSQWHTPPFEPTVIDGFLHGRGAADMKGSLACMIVAVERFIAEHPDHQGSIGFLITSDEEGPFINGTVRVVETLMARNELIDMCIVGEPSSTLAVGDVVKNGRRGSITGDLKVKGTQGHVAYPHLANNPVHKALPALAELAATQWDEGNAYFPPTSFQIPNLQAGTGASNVIPGEFDVQFNFRFSTELTDEEIKRRVHSVLDAHGLDYGVKWTLSGQPFLTDTGELLAAVVAAVEEVNHQAPALLTTGGTSDGRFIAQMGAQVVELGPVNATIHKVNECVRIADLEKLTDMYQKTLNHLLG</sequence>
<organism>
    <name type="scientific">Vibrio cholerae serotype O1 (strain ATCC 39541 / Classical Ogawa 395 / O395)</name>
    <dbReference type="NCBI Taxonomy" id="345073"/>
    <lineage>
        <taxon>Bacteria</taxon>
        <taxon>Pseudomonadati</taxon>
        <taxon>Pseudomonadota</taxon>
        <taxon>Gammaproteobacteria</taxon>
        <taxon>Vibrionales</taxon>
        <taxon>Vibrionaceae</taxon>
        <taxon>Vibrio</taxon>
    </lineage>
</organism>
<name>DAPE_VIBC3</name>
<accession>A5F6B5</accession>
<accession>C3M2Y4</accession>
<evidence type="ECO:0000255" key="1">
    <source>
        <dbReference type="HAMAP-Rule" id="MF_01690"/>
    </source>
</evidence>
<proteinExistence type="inferred from homology"/>
<feature type="chain" id="PRO_0000375767" description="Succinyl-diaminopimelate desuccinylase">
    <location>
        <begin position="1"/>
        <end position="377"/>
    </location>
</feature>
<feature type="active site" evidence="1">
    <location>
        <position position="70"/>
    </location>
</feature>
<feature type="active site" description="Proton acceptor" evidence="1">
    <location>
        <position position="135"/>
    </location>
</feature>
<feature type="binding site" evidence="1">
    <location>
        <position position="68"/>
    </location>
    <ligand>
        <name>Zn(2+)</name>
        <dbReference type="ChEBI" id="CHEBI:29105"/>
        <label>1</label>
    </ligand>
</feature>
<feature type="binding site" evidence="1">
    <location>
        <position position="101"/>
    </location>
    <ligand>
        <name>Zn(2+)</name>
        <dbReference type="ChEBI" id="CHEBI:29105"/>
        <label>1</label>
    </ligand>
</feature>
<feature type="binding site" evidence="1">
    <location>
        <position position="101"/>
    </location>
    <ligand>
        <name>Zn(2+)</name>
        <dbReference type="ChEBI" id="CHEBI:29105"/>
        <label>2</label>
    </ligand>
</feature>
<feature type="binding site" evidence="1">
    <location>
        <position position="136"/>
    </location>
    <ligand>
        <name>Zn(2+)</name>
        <dbReference type="ChEBI" id="CHEBI:29105"/>
        <label>2</label>
    </ligand>
</feature>
<feature type="binding site" evidence="1">
    <location>
        <position position="164"/>
    </location>
    <ligand>
        <name>Zn(2+)</name>
        <dbReference type="ChEBI" id="CHEBI:29105"/>
        <label>1</label>
    </ligand>
</feature>
<feature type="binding site" evidence="1">
    <location>
        <position position="350"/>
    </location>
    <ligand>
        <name>Zn(2+)</name>
        <dbReference type="ChEBI" id="CHEBI:29105"/>
        <label>2</label>
    </ligand>
</feature>
<keyword id="KW-0028">Amino-acid biosynthesis</keyword>
<keyword id="KW-0170">Cobalt</keyword>
<keyword id="KW-0220">Diaminopimelate biosynthesis</keyword>
<keyword id="KW-0378">Hydrolase</keyword>
<keyword id="KW-0457">Lysine biosynthesis</keyword>
<keyword id="KW-0479">Metal-binding</keyword>
<keyword id="KW-0862">Zinc</keyword>
<comment type="function">
    <text evidence="1">Catalyzes the hydrolysis of N-succinyl-L,L-diaminopimelic acid (SDAP), forming succinate and LL-2,6-diaminopimelate (DAP), an intermediate involved in the bacterial biosynthesis of lysine and meso-diaminopimelic acid, an essential component of bacterial cell walls.</text>
</comment>
<comment type="catalytic activity">
    <reaction evidence="1">
        <text>N-succinyl-(2S,6S)-2,6-diaminopimelate + H2O = (2S,6S)-2,6-diaminopimelate + succinate</text>
        <dbReference type="Rhea" id="RHEA:22608"/>
        <dbReference type="ChEBI" id="CHEBI:15377"/>
        <dbReference type="ChEBI" id="CHEBI:30031"/>
        <dbReference type="ChEBI" id="CHEBI:57609"/>
        <dbReference type="ChEBI" id="CHEBI:58087"/>
        <dbReference type="EC" id="3.5.1.18"/>
    </reaction>
</comment>
<comment type="cofactor">
    <cofactor evidence="1">
        <name>Zn(2+)</name>
        <dbReference type="ChEBI" id="CHEBI:29105"/>
    </cofactor>
    <cofactor evidence="1">
        <name>Co(2+)</name>
        <dbReference type="ChEBI" id="CHEBI:48828"/>
    </cofactor>
    <text evidence="1">Binds 2 Zn(2+) or Co(2+) ions per subunit.</text>
</comment>
<comment type="pathway">
    <text evidence="1">Amino-acid biosynthesis; L-lysine biosynthesis via DAP pathway; LL-2,6-diaminopimelate from (S)-tetrahydrodipicolinate (succinylase route): step 3/3.</text>
</comment>
<comment type="subunit">
    <text evidence="1">Homodimer.</text>
</comment>
<comment type="similarity">
    <text evidence="1">Belongs to the peptidase M20A family. DapE subfamily.</text>
</comment>
<reference key="1">
    <citation type="submission" date="2007-03" db="EMBL/GenBank/DDBJ databases">
        <authorList>
            <person name="Heidelberg J."/>
        </authorList>
    </citation>
    <scope>NUCLEOTIDE SEQUENCE [LARGE SCALE GENOMIC DNA]</scope>
    <source>
        <strain>ATCC 39541 / Classical Ogawa 395 / O395</strain>
    </source>
</reference>
<reference key="2">
    <citation type="journal article" date="2008" name="PLoS ONE">
        <title>A recalibrated molecular clock and independent origins for the cholera pandemic clones.</title>
        <authorList>
            <person name="Feng L."/>
            <person name="Reeves P.R."/>
            <person name="Lan R."/>
            <person name="Ren Y."/>
            <person name="Gao C."/>
            <person name="Zhou Z."/>
            <person name="Ren Y."/>
            <person name="Cheng J."/>
            <person name="Wang W."/>
            <person name="Wang J."/>
            <person name="Qian W."/>
            <person name="Li D."/>
            <person name="Wang L."/>
        </authorList>
    </citation>
    <scope>NUCLEOTIDE SEQUENCE [LARGE SCALE GENOMIC DNA]</scope>
    <source>
        <strain>ATCC 39541 / Classical Ogawa 395 / O395</strain>
    </source>
</reference>